<keyword id="KW-0244">Early protein</keyword>
<keyword id="KW-0880">Kelch repeat</keyword>
<keyword id="KW-1185">Reference proteome</keyword>
<keyword id="KW-0677">Repeat</keyword>
<protein>
    <recommendedName>
        <fullName>Kelch repeat protein C2</fullName>
    </recommendedName>
</protein>
<sequence length="512" mass="59241">MESVIFSINGEIIQVNKEIITASPYNFFKRIQDHHLKDEAIILNGINYHAFESLLDYIRWKKINITINNVEMILVAAIIIDVPPVVDLCVKTMIHNINSTNCIRMFNFSKRYGIKKLYNASMSEIINNITAVTSDPEFGKLSKDELTTILSHENVNVNHEDVTAMILLKWIHKNPNDVDIINILHPKFMTNTMRNAISLLGLTISKSTKPVTRNGIKHNIVVIKNSDYISTITHYSPRTEYWTIVGNTDRQFYNANVLHNCLYIIGGMINNRHVYSVSRVDLETKKWKTVTNMSSLKSEVSTCVNDGKLYVIGGLEFSISTGVAEYLKHGTSKWIRLPNLITPRYSGASVFVNDDIYVMGGVYTTYEKYVVLNDVECFTKNRWIKKSPMPRHHSIVYAVEYDGDIYVITGITHETRNYLYKYIVKEDKWIELYMYFNHVGKMFVCSCGDYILIIADAKYEYYPKSNTWNLFDMSTRNIEYYDMFTKDETPKCNVTHKSLPSFLSNCEKQFLQ</sequence>
<dbReference type="EMBL" id="M22812">
    <property type="protein sequence ID" value="AAA69606.1"/>
    <property type="molecule type" value="Genomic_DNA"/>
</dbReference>
<dbReference type="EMBL" id="AY243312">
    <property type="protein sequence ID" value="AAO89305.1"/>
    <property type="molecule type" value="Genomic_DNA"/>
</dbReference>
<dbReference type="PIR" id="F33348">
    <property type="entry name" value="WZVZB6"/>
</dbReference>
<dbReference type="RefSeq" id="YP_232908.1">
    <property type="nucleotide sequence ID" value="NC_006998.1"/>
</dbReference>
<dbReference type="SMR" id="P17371"/>
<dbReference type="DNASU" id="3707641"/>
<dbReference type="GeneID" id="3707641"/>
<dbReference type="KEGG" id="vg:3707641"/>
<dbReference type="Proteomes" id="UP000000344">
    <property type="component" value="Genome"/>
</dbReference>
<dbReference type="Gene3D" id="1.25.40.420">
    <property type="match status" value="1"/>
</dbReference>
<dbReference type="Gene3D" id="2.120.10.80">
    <property type="entry name" value="Kelch-type beta propeller"/>
    <property type="match status" value="1"/>
</dbReference>
<dbReference type="Gene3D" id="3.30.710.10">
    <property type="entry name" value="Potassium Channel Kv1.1, Chain A"/>
    <property type="match status" value="1"/>
</dbReference>
<dbReference type="InterPro" id="IPR011705">
    <property type="entry name" value="BACK"/>
</dbReference>
<dbReference type="InterPro" id="IPR000210">
    <property type="entry name" value="BTB/POZ_dom"/>
</dbReference>
<dbReference type="InterPro" id="IPR015915">
    <property type="entry name" value="Kelch-typ_b-propeller"/>
</dbReference>
<dbReference type="InterPro" id="IPR006652">
    <property type="entry name" value="Kelch_1"/>
</dbReference>
<dbReference type="InterPro" id="IPR011333">
    <property type="entry name" value="SKP1/BTB/POZ_sf"/>
</dbReference>
<dbReference type="PANTHER" id="PTHR24412">
    <property type="entry name" value="KELCH PROTEIN"/>
    <property type="match status" value="1"/>
</dbReference>
<dbReference type="PANTHER" id="PTHR24412:SF480">
    <property type="entry name" value="KELCH-LIKE PROTEIN 8"/>
    <property type="match status" value="1"/>
</dbReference>
<dbReference type="Pfam" id="PF07707">
    <property type="entry name" value="BACK"/>
    <property type="match status" value="1"/>
</dbReference>
<dbReference type="Pfam" id="PF00651">
    <property type="entry name" value="BTB"/>
    <property type="match status" value="1"/>
</dbReference>
<dbReference type="Pfam" id="PF01344">
    <property type="entry name" value="Kelch_1"/>
    <property type="match status" value="3"/>
</dbReference>
<dbReference type="SMART" id="SM00875">
    <property type="entry name" value="BACK"/>
    <property type="match status" value="1"/>
</dbReference>
<dbReference type="SMART" id="SM00225">
    <property type="entry name" value="BTB"/>
    <property type="match status" value="1"/>
</dbReference>
<dbReference type="SMART" id="SM00612">
    <property type="entry name" value="Kelch"/>
    <property type="match status" value="3"/>
</dbReference>
<dbReference type="SUPFAM" id="SSF117281">
    <property type="entry name" value="Kelch motif"/>
    <property type="match status" value="1"/>
</dbReference>
<dbReference type="SUPFAM" id="SSF54695">
    <property type="entry name" value="POZ domain"/>
    <property type="match status" value="1"/>
</dbReference>
<dbReference type="PROSITE" id="PS50097">
    <property type="entry name" value="BTB"/>
    <property type="match status" value="1"/>
</dbReference>
<organism>
    <name type="scientific">Vaccinia virus (strain Western Reserve)</name>
    <name type="common">VACV</name>
    <name type="synonym">Vaccinia virus (strain WR)</name>
    <dbReference type="NCBI Taxonomy" id="10254"/>
    <lineage>
        <taxon>Viruses</taxon>
        <taxon>Varidnaviria</taxon>
        <taxon>Bamfordvirae</taxon>
        <taxon>Nucleocytoviricota</taxon>
        <taxon>Pokkesviricetes</taxon>
        <taxon>Chitovirales</taxon>
        <taxon>Poxviridae</taxon>
        <taxon>Chordopoxvirinae</taxon>
        <taxon>Orthopoxvirus</taxon>
        <taxon>Vaccinia virus</taxon>
    </lineage>
</organism>
<evidence type="ECO:0000255" key="1">
    <source>
        <dbReference type="PROSITE-ProRule" id="PRU00037"/>
    </source>
</evidence>
<evidence type="ECO:0000305" key="2"/>
<proteinExistence type="inferred from homology"/>
<feature type="chain" id="PRO_0000119159" description="Kelch repeat protein C2">
    <location>
        <begin position="1"/>
        <end position="512"/>
    </location>
</feature>
<feature type="domain" description="BTB" evidence="1">
    <location>
        <begin position="2"/>
        <end position="67"/>
    </location>
</feature>
<feature type="domain" description="BACK">
    <location>
        <begin position="102"/>
        <end position="176"/>
    </location>
</feature>
<feature type="repeat" description="Kelch 1">
    <location>
        <begin position="216"/>
        <end position="261"/>
    </location>
</feature>
<feature type="repeat" description="Kelch 2">
    <location>
        <begin position="262"/>
        <end position="307"/>
    </location>
</feature>
<feature type="repeat" description="Kelch 3">
    <location>
        <begin position="309"/>
        <end position="354"/>
    </location>
</feature>
<feature type="repeat" description="Kelch 4">
    <location>
        <begin position="356"/>
        <end position="403"/>
    </location>
</feature>
<feature type="repeat" description="Kelch 5">
    <location>
        <begin position="405"/>
        <end position="449"/>
    </location>
</feature>
<feature type="repeat" description="Kelch 6">
    <location>
        <begin position="452"/>
        <end position="498"/>
    </location>
</feature>
<organismHost>
    <name type="scientific">Bos taurus</name>
    <name type="common">Bovine</name>
    <dbReference type="NCBI Taxonomy" id="9913"/>
</organismHost>
<comment type="similarity">
    <text evidence="2">Belongs to the poxviruses Kelch family.</text>
</comment>
<reference key="1">
    <citation type="journal article" date="1988" name="Virology">
        <title>Analysis of a large cluster of nonessential genes deleted from a vaccinia virus terminal transposition mutant.</title>
        <authorList>
            <person name="Kotwal G.J."/>
            <person name="Moss B."/>
        </authorList>
    </citation>
    <scope>NUCLEOTIDE SEQUENCE [GENOMIC DNA]</scope>
</reference>
<reference key="2">
    <citation type="submission" date="2003-02" db="EMBL/GenBank/DDBJ databases">
        <title>Sequencing of the coding region of Vaccinia-WR to an average 9-fold redundancy and an error rate of 0.16/10kb.</title>
        <authorList>
            <person name="Esposito J.J."/>
            <person name="Frace A.M."/>
            <person name="Sammons S.A."/>
            <person name="Olsen-Rasmussen M."/>
            <person name="Osborne J."/>
            <person name="Wohlhueter R."/>
        </authorList>
    </citation>
    <scope>NUCLEOTIDE SEQUENCE [LARGE SCALE GENOMIC DNA]</scope>
</reference>
<gene>
    <name type="ordered locus">VACWR026</name>
    <name type="ORF">C2L</name>
</gene>
<name>C2_VACCW</name>
<accession>P17371</accession>
<accession>Q76ZY3</accession>